<reference key="1">
    <citation type="journal article" date="2008" name="BMC Genomics">
        <title>Genome sequence and rapid evolution of the rice pathogen Xanthomonas oryzae pv. oryzae PXO99A.</title>
        <authorList>
            <person name="Salzberg S.L."/>
            <person name="Sommer D.D."/>
            <person name="Schatz M.C."/>
            <person name="Phillippy A.M."/>
            <person name="Rabinowicz P.D."/>
            <person name="Tsuge S."/>
            <person name="Furutani A."/>
            <person name="Ochiai H."/>
            <person name="Delcher A.L."/>
            <person name="Kelley D."/>
            <person name="Madupu R."/>
            <person name="Puiu D."/>
            <person name="Radune D."/>
            <person name="Shumway M."/>
            <person name="Trapnell C."/>
            <person name="Aparna G."/>
            <person name="Jha G."/>
            <person name="Pandey A."/>
            <person name="Patil P.B."/>
            <person name="Ishihara H."/>
            <person name="Meyer D.F."/>
            <person name="Szurek B."/>
            <person name="Verdier V."/>
            <person name="Koebnik R."/>
            <person name="Dow J.M."/>
            <person name="Ryan R.P."/>
            <person name="Hirata H."/>
            <person name="Tsuyumu S."/>
            <person name="Won Lee S."/>
            <person name="Seo Y.-S."/>
            <person name="Sriariyanum M."/>
            <person name="Ronald P.C."/>
            <person name="Sonti R.V."/>
            <person name="Van Sluys M.-A."/>
            <person name="Leach J.E."/>
            <person name="White F.F."/>
            <person name="Bogdanove A.J."/>
        </authorList>
    </citation>
    <scope>NUCLEOTIDE SEQUENCE [LARGE SCALE GENOMIC DNA]</scope>
    <source>
        <strain>PXO99A</strain>
    </source>
</reference>
<keyword id="KW-0378">Hydrolase</keyword>
<keyword id="KW-0546">Nucleotide metabolism</keyword>
<keyword id="KW-0547">Nucleotide-binding</keyword>
<evidence type="ECO:0000255" key="1">
    <source>
        <dbReference type="HAMAP-Rule" id="MF_00146"/>
    </source>
</evidence>
<protein>
    <recommendedName>
        <fullName evidence="1">dCTP deaminase</fullName>
        <ecNumber evidence="1">3.5.4.13</ecNumber>
    </recommendedName>
    <alternativeName>
        <fullName evidence="1">Deoxycytidine triphosphate deaminase</fullName>
    </alternativeName>
</protein>
<sequence length="189" mass="21241">MSIKSDRWIKRMAEQHAMIAPFEPGQIKHDAAGQRIVSFGTSSYGYDVRCSREFKIFTNINSTIVDPKRFDPGSFVDVESDVCIIPPNSFALARTVEYFRIPRDTLVVCLGKSTYARCGIIVNVTPLEPEWEGHVTLEFSNTTPLPARIYANEGVAQMLFFQSDEVCETSYKDRGGKYQGQTGVTLPRT</sequence>
<dbReference type="EC" id="3.5.4.13" evidence="1"/>
<dbReference type="EMBL" id="CP000967">
    <property type="protein sequence ID" value="ACD60136.1"/>
    <property type="molecule type" value="Genomic_DNA"/>
</dbReference>
<dbReference type="RefSeq" id="WP_011259784.1">
    <property type="nucleotide sequence ID" value="NC_010717.2"/>
</dbReference>
<dbReference type="SMR" id="B2SWC5"/>
<dbReference type="GeneID" id="77336933"/>
<dbReference type="KEGG" id="xop:PXO_01242"/>
<dbReference type="eggNOG" id="COG0717">
    <property type="taxonomic scope" value="Bacteria"/>
</dbReference>
<dbReference type="HOGENOM" id="CLU_087476_4_0_6"/>
<dbReference type="UniPathway" id="UPA00610">
    <property type="reaction ID" value="UER00665"/>
</dbReference>
<dbReference type="Proteomes" id="UP000001740">
    <property type="component" value="Chromosome"/>
</dbReference>
<dbReference type="GO" id="GO:0008829">
    <property type="term" value="F:dCTP deaminase activity"/>
    <property type="evidence" value="ECO:0007669"/>
    <property type="project" value="UniProtKB-UniRule"/>
</dbReference>
<dbReference type="GO" id="GO:0000166">
    <property type="term" value="F:nucleotide binding"/>
    <property type="evidence" value="ECO:0007669"/>
    <property type="project" value="UniProtKB-KW"/>
</dbReference>
<dbReference type="GO" id="GO:0006226">
    <property type="term" value="P:dUMP biosynthetic process"/>
    <property type="evidence" value="ECO:0007669"/>
    <property type="project" value="UniProtKB-UniPathway"/>
</dbReference>
<dbReference type="GO" id="GO:0006229">
    <property type="term" value="P:dUTP biosynthetic process"/>
    <property type="evidence" value="ECO:0007669"/>
    <property type="project" value="UniProtKB-UniRule"/>
</dbReference>
<dbReference type="GO" id="GO:0015949">
    <property type="term" value="P:nucleobase-containing small molecule interconversion"/>
    <property type="evidence" value="ECO:0007669"/>
    <property type="project" value="TreeGrafter"/>
</dbReference>
<dbReference type="CDD" id="cd07557">
    <property type="entry name" value="trimeric_dUTPase"/>
    <property type="match status" value="1"/>
</dbReference>
<dbReference type="FunFam" id="2.70.40.10:FF:000001">
    <property type="entry name" value="dCTP deaminase"/>
    <property type="match status" value="1"/>
</dbReference>
<dbReference type="Gene3D" id="2.70.40.10">
    <property type="match status" value="1"/>
</dbReference>
<dbReference type="HAMAP" id="MF_00146">
    <property type="entry name" value="dCTP_deaminase"/>
    <property type="match status" value="1"/>
</dbReference>
<dbReference type="InterPro" id="IPR011962">
    <property type="entry name" value="dCTP_deaminase"/>
</dbReference>
<dbReference type="InterPro" id="IPR036157">
    <property type="entry name" value="dUTPase-like_sf"/>
</dbReference>
<dbReference type="InterPro" id="IPR033704">
    <property type="entry name" value="dUTPase_trimeric"/>
</dbReference>
<dbReference type="NCBIfam" id="TIGR02274">
    <property type="entry name" value="dCTP_deam"/>
    <property type="match status" value="1"/>
</dbReference>
<dbReference type="PANTHER" id="PTHR42680">
    <property type="entry name" value="DCTP DEAMINASE"/>
    <property type="match status" value="1"/>
</dbReference>
<dbReference type="PANTHER" id="PTHR42680:SF3">
    <property type="entry name" value="DCTP DEAMINASE"/>
    <property type="match status" value="1"/>
</dbReference>
<dbReference type="Pfam" id="PF22769">
    <property type="entry name" value="DCD"/>
    <property type="match status" value="1"/>
</dbReference>
<dbReference type="SUPFAM" id="SSF51283">
    <property type="entry name" value="dUTPase-like"/>
    <property type="match status" value="1"/>
</dbReference>
<organism>
    <name type="scientific">Xanthomonas oryzae pv. oryzae (strain PXO99A)</name>
    <dbReference type="NCBI Taxonomy" id="360094"/>
    <lineage>
        <taxon>Bacteria</taxon>
        <taxon>Pseudomonadati</taxon>
        <taxon>Pseudomonadota</taxon>
        <taxon>Gammaproteobacteria</taxon>
        <taxon>Lysobacterales</taxon>
        <taxon>Lysobacteraceae</taxon>
        <taxon>Xanthomonas</taxon>
    </lineage>
</organism>
<gene>
    <name evidence="1" type="primary">dcd</name>
    <name type="ordered locus">PXO_01242</name>
</gene>
<name>DCD_XANOP</name>
<comment type="function">
    <text evidence="1">Catalyzes the deamination of dCTP to dUTP.</text>
</comment>
<comment type="catalytic activity">
    <reaction evidence="1">
        <text>dCTP + H2O + H(+) = dUTP + NH4(+)</text>
        <dbReference type="Rhea" id="RHEA:22680"/>
        <dbReference type="ChEBI" id="CHEBI:15377"/>
        <dbReference type="ChEBI" id="CHEBI:15378"/>
        <dbReference type="ChEBI" id="CHEBI:28938"/>
        <dbReference type="ChEBI" id="CHEBI:61481"/>
        <dbReference type="ChEBI" id="CHEBI:61555"/>
        <dbReference type="EC" id="3.5.4.13"/>
    </reaction>
</comment>
<comment type="pathway">
    <text evidence="1">Pyrimidine metabolism; dUMP biosynthesis; dUMP from dCTP (dUTP route): step 1/2.</text>
</comment>
<comment type="subunit">
    <text evidence="1">Homotrimer.</text>
</comment>
<comment type="similarity">
    <text evidence="1">Belongs to the dCTP deaminase family.</text>
</comment>
<proteinExistence type="inferred from homology"/>
<feature type="chain" id="PRO_1000096461" description="dCTP deaminase">
    <location>
        <begin position="1"/>
        <end position="189"/>
    </location>
</feature>
<feature type="active site" description="Proton donor/acceptor" evidence="1">
    <location>
        <position position="138"/>
    </location>
</feature>
<feature type="binding site" evidence="1">
    <location>
        <begin position="112"/>
        <end position="117"/>
    </location>
    <ligand>
        <name>dCTP</name>
        <dbReference type="ChEBI" id="CHEBI:61481"/>
    </ligand>
</feature>
<feature type="binding site" evidence="1">
    <location>
        <begin position="136"/>
        <end position="138"/>
    </location>
    <ligand>
        <name>dCTP</name>
        <dbReference type="ChEBI" id="CHEBI:61481"/>
    </ligand>
</feature>
<feature type="binding site" evidence="1">
    <location>
        <position position="157"/>
    </location>
    <ligand>
        <name>dCTP</name>
        <dbReference type="ChEBI" id="CHEBI:61481"/>
    </ligand>
</feature>
<feature type="binding site" evidence="1">
    <location>
        <position position="171"/>
    </location>
    <ligand>
        <name>dCTP</name>
        <dbReference type="ChEBI" id="CHEBI:61481"/>
    </ligand>
</feature>
<feature type="binding site" evidence="1">
    <location>
        <position position="181"/>
    </location>
    <ligand>
        <name>dCTP</name>
        <dbReference type="ChEBI" id="CHEBI:61481"/>
    </ligand>
</feature>
<accession>B2SWC5</accession>